<keyword id="KW-0133">Cell shape</keyword>
<keyword id="KW-0961">Cell wall biogenesis/degradation</keyword>
<keyword id="KW-0413">Isomerase</keyword>
<keyword id="KW-0573">Peptidoglycan synthesis</keyword>
<name>MURI_CLOB6</name>
<sequence length="257" mass="28813">MSINDKPIGFFDSGVGGISVLKEAFKLLPKEDFLYYGDSKNTPYGTKKVEEVKALTFNATDFLMSKGIKALVVACNTATSVTINDLRENYDIPIIGIEPALKPAVELKKGGKIIIMATPMTLAEKKFANLMDLYKETEDIEPLPCPGLPELIEQGIVSGDVIYNYLKDKFSKYDDEKISSIVLGCTHYPFVEETLKEVTHNKACIIDGSFGTSRELKRQLKNSNMLREENRVGKVTIFNSREDKDIIDLSYKLFNMK</sequence>
<organism>
    <name type="scientific">Clostridium botulinum (strain 657 / Type Ba4)</name>
    <dbReference type="NCBI Taxonomy" id="515621"/>
    <lineage>
        <taxon>Bacteria</taxon>
        <taxon>Bacillati</taxon>
        <taxon>Bacillota</taxon>
        <taxon>Clostridia</taxon>
        <taxon>Eubacteriales</taxon>
        <taxon>Clostridiaceae</taxon>
        <taxon>Clostridium</taxon>
    </lineage>
</organism>
<protein>
    <recommendedName>
        <fullName evidence="1">Glutamate racemase</fullName>
        <ecNumber evidence="1">5.1.1.3</ecNumber>
    </recommendedName>
</protein>
<evidence type="ECO:0000255" key="1">
    <source>
        <dbReference type="HAMAP-Rule" id="MF_00258"/>
    </source>
</evidence>
<reference key="1">
    <citation type="submission" date="2008-05" db="EMBL/GenBank/DDBJ databases">
        <title>Genome sequence of Clostridium botulinum Ba4 strain 657.</title>
        <authorList>
            <person name="Shrivastava S."/>
            <person name="Brown J.L."/>
            <person name="Bruce D."/>
            <person name="Detter C."/>
            <person name="Munk C."/>
            <person name="Smith L.A."/>
            <person name="Smith T.J."/>
            <person name="Sutton G."/>
            <person name="Brettin T.S."/>
        </authorList>
    </citation>
    <scope>NUCLEOTIDE SEQUENCE [LARGE SCALE GENOMIC DNA]</scope>
    <source>
        <strain>657 / Type Ba4</strain>
    </source>
</reference>
<dbReference type="EC" id="5.1.1.3" evidence="1"/>
<dbReference type="EMBL" id="CP001083">
    <property type="protein sequence ID" value="ACQ53971.1"/>
    <property type="molecule type" value="Genomic_DNA"/>
</dbReference>
<dbReference type="RefSeq" id="WP_003361750.1">
    <property type="nucleotide sequence ID" value="NC_012658.1"/>
</dbReference>
<dbReference type="SMR" id="C3KWB8"/>
<dbReference type="KEGG" id="cbi:CLJ_B3893"/>
<dbReference type="HOGENOM" id="CLU_052344_1_0_9"/>
<dbReference type="UniPathway" id="UPA00219"/>
<dbReference type="Proteomes" id="UP000002333">
    <property type="component" value="Chromosome"/>
</dbReference>
<dbReference type="GO" id="GO:0008881">
    <property type="term" value="F:glutamate racemase activity"/>
    <property type="evidence" value="ECO:0007669"/>
    <property type="project" value="UniProtKB-UniRule"/>
</dbReference>
<dbReference type="GO" id="GO:0071555">
    <property type="term" value="P:cell wall organization"/>
    <property type="evidence" value="ECO:0007669"/>
    <property type="project" value="UniProtKB-KW"/>
</dbReference>
<dbReference type="GO" id="GO:0009252">
    <property type="term" value="P:peptidoglycan biosynthetic process"/>
    <property type="evidence" value="ECO:0007669"/>
    <property type="project" value="UniProtKB-UniRule"/>
</dbReference>
<dbReference type="GO" id="GO:0008360">
    <property type="term" value="P:regulation of cell shape"/>
    <property type="evidence" value="ECO:0007669"/>
    <property type="project" value="UniProtKB-KW"/>
</dbReference>
<dbReference type="FunFam" id="3.40.50.1860:FF:000002">
    <property type="entry name" value="Glutamate racemase"/>
    <property type="match status" value="1"/>
</dbReference>
<dbReference type="Gene3D" id="3.40.50.1860">
    <property type="match status" value="2"/>
</dbReference>
<dbReference type="HAMAP" id="MF_00258">
    <property type="entry name" value="Glu_racemase"/>
    <property type="match status" value="1"/>
</dbReference>
<dbReference type="InterPro" id="IPR015942">
    <property type="entry name" value="Asp/Glu/hydantoin_racemase"/>
</dbReference>
<dbReference type="InterPro" id="IPR001920">
    <property type="entry name" value="Asp/Glu_race"/>
</dbReference>
<dbReference type="InterPro" id="IPR018187">
    <property type="entry name" value="Asp/Glu_racemase_AS_1"/>
</dbReference>
<dbReference type="InterPro" id="IPR033134">
    <property type="entry name" value="Asp/Glu_racemase_AS_2"/>
</dbReference>
<dbReference type="InterPro" id="IPR004391">
    <property type="entry name" value="Glu_race"/>
</dbReference>
<dbReference type="NCBIfam" id="TIGR00067">
    <property type="entry name" value="glut_race"/>
    <property type="match status" value="1"/>
</dbReference>
<dbReference type="PANTHER" id="PTHR21198">
    <property type="entry name" value="GLUTAMATE RACEMASE"/>
    <property type="match status" value="1"/>
</dbReference>
<dbReference type="PANTHER" id="PTHR21198:SF3">
    <property type="entry name" value="GLUTAMATE RACEMASE"/>
    <property type="match status" value="1"/>
</dbReference>
<dbReference type="Pfam" id="PF01177">
    <property type="entry name" value="Asp_Glu_race"/>
    <property type="match status" value="1"/>
</dbReference>
<dbReference type="SUPFAM" id="SSF53681">
    <property type="entry name" value="Aspartate/glutamate racemase"/>
    <property type="match status" value="2"/>
</dbReference>
<dbReference type="PROSITE" id="PS00923">
    <property type="entry name" value="ASP_GLU_RACEMASE_1"/>
    <property type="match status" value="1"/>
</dbReference>
<dbReference type="PROSITE" id="PS00924">
    <property type="entry name" value="ASP_GLU_RACEMASE_2"/>
    <property type="match status" value="1"/>
</dbReference>
<comment type="function">
    <text evidence="1">Provides the (R)-glutamate required for cell wall biosynthesis.</text>
</comment>
<comment type="catalytic activity">
    <reaction evidence="1">
        <text>L-glutamate = D-glutamate</text>
        <dbReference type="Rhea" id="RHEA:12813"/>
        <dbReference type="ChEBI" id="CHEBI:29985"/>
        <dbReference type="ChEBI" id="CHEBI:29986"/>
        <dbReference type="EC" id="5.1.1.3"/>
    </reaction>
</comment>
<comment type="pathway">
    <text evidence="1">Cell wall biogenesis; peptidoglycan biosynthesis.</text>
</comment>
<comment type="similarity">
    <text evidence="1">Belongs to the aspartate/glutamate racemases family.</text>
</comment>
<feature type="chain" id="PRO_1000204624" description="Glutamate racemase">
    <location>
        <begin position="1"/>
        <end position="257"/>
    </location>
</feature>
<feature type="active site" description="Proton donor/acceptor" evidence="1">
    <location>
        <position position="75"/>
    </location>
</feature>
<feature type="active site" description="Proton donor/acceptor" evidence="1">
    <location>
        <position position="185"/>
    </location>
</feature>
<feature type="binding site" evidence="1">
    <location>
        <begin position="12"/>
        <end position="13"/>
    </location>
    <ligand>
        <name>substrate</name>
    </ligand>
</feature>
<feature type="binding site" evidence="1">
    <location>
        <begin position="44"/>
        <end position="45"/>
    </location>
    <ligand>
        <name>substrate</name>
    </ligand>
</feature>
<feature type="binding site" evidence="1">
    <location>
        <begin position="76"/>
        <end position="77"/>
    </location>
    <ligand>
        <name>substrate</name>
    </ligand>
</feature>
<feature type="binding site" evidence="1">
    <location>
        <begin position="186"/>
        <end position="187"/>
    </location>
    <ligand>
        <name>substrate</name>
    </ligand>
</feature>
<gene>
    <name evidence="1" type="primary">murI</name>
    <name type="ordered locus">CLJ_B3893</name>
</gene>
<proteinExistence type="inferred from homology"/>
<accession>C3KWB8</accession>